<organism>
    <name type="scientific">Cupriavidus metallidurans (strain ATCC 43123 / DSM 2839 / NBRC 102507 / CH34)</name>
    <name type="common">Ralstonia metallidurans</name>
    <dbReference type="NCBI Taxonomy" id="266264"/>
    <lineage>
        <taxon>Bacteria</taxon>
        <taxon>Pseudomonadati</taxon>
        <taxon>Pseudomonadota</taxon>
        <taxon>Betaproteobacteria</taxon>
        <taxon>Burkholderiales</taxon>
        <taxon>Burkholderiaceae</taxon>
        <taxon>Cupriavidus</taxon>
    </lineage>
</organism>
<name>ISPE_CUPMC</name>
<evidence type="ECO:0000255" key="1">
    <source>
        <dbReference type="HAMAP-Rule" id="MF_00061"/>
    </source>
</evidence>
<comment type="function">
    <text evidence="1">Catalyzes the phosphorylation of the position 2 hydroxy group of 4-diphosphocytidyl-2C-methyl-D-erythritol.</text>
</comment>
<comment type="catalytic activity">
    <reaction evidence="1">
        <text>4-CDP-2-C-methyl-D-erythritol + ATP = 4-CDP-2-C-methyl-D-erythritol 2-phosphate + ADP + H(+)</text>
        <dbReference type="Rhea" id="RHEA:18437"/>
        <dbReference type="ChEBI" id="CHEBI:15378"/>
        <dbReference type="ChEBI" id="CHEBI:30616"/>
        <dbReference type="ChEBI" id="CHEBI:57823"/>
        <dbReference type="ChEBI" id="CHEBI:57919"/>
        <dbReference type="ChEBI" id="CHEBI:456216"/>
        <dbReference type="EC" id="2.7.1.148"/>
    </reaction>
</comment>
<comment type="pathway">
    <text evidence="1">Isoprenoid biosynthesis; isopentenyl diphosphate biosynthesis via DXP pathway; isopentenyl diphosphate from 1-deoxy-D-xylulose 5-phosphate: step 3/6.</text>
</comment>
<comment type="similarity">
    <text evidence="1">Belongs to the GHMP kinase family. IspE subfamily.</text>
</comment>
<feature type="chain" id="PRO_0000335744" description="4-diphosphocytidyl-2-C-methyl-D-erythritol kinase">
    <location>
        <begin position="1"/>
        <end position="292"/>
    </location>
</feature>
<feature type="active site" evidence="1">
    <location>
        <position position="20"/>
    </location>
</feature>
<feature type="active site" evidence="1">
    <location>
        <position position="145"/>
    </location>
</feature>
<feature type="binding site" evidence="1">
    <location>
        <begin position="103"/>
        <end position="113"/>
    </location>
    <ligand>
        <name>ATP</name>
        <dbReference type="ChEBI" id="CHEBI:30616"/>
    </ligand>
</feature>
<gene>
    <name evidence="1" type="primary">ispE</name>
    <name type="ordered locus">Rmet_0290</name>
</gene>
<sequence length="292" mass="31781">MTVGTALPPPELRNCPAPAKLNLFLHVTGRRPDGYHTLQTVFQLIDWSDTLHFHRRDDGVITRVTDIPGVPADTDLVVRAARAMQAASGTRFGVDIAIDKILPMGGGIGGGSSDAATTLLALNRLWGVNLPREELMRIGLSLGADVPVFVFGQNAFAEGVGEELTPVALPDSWFVVIHPRQHVPTAAIFSDERLTRNSPISIVADFAACTNKFAFGRNDLETIATAKFGEVARALEWLKNYSPHARMTGSGACVFARFEDEQTAQRVMERLPSEWDGRCVKSLSHHPLATFA</sequence>
<protein>
    <recommendedName>
        <fullName evidence="1">4-diphosphocytidyl-2-C-methyl-D-erythritol kinase</fullName>
        <shortName evidence="1">CMK</shortName>
        <ecNumber evidence="1">2.7.1.148</ecNumber>
    </recommendedName>
    <alternativeName>
        <fullName evidence="1">4-(cytidine-5'-diphospho)-2-C-methyl-D-erythritol kinase</fullName>
    </alternativeName>
</protein>
<reference key="1">
    <citation type="journal article" date="2010" name="PLoS ONE">
        <title>The complete genome sequence of Cupriavidus metallidurans strain CH34, a master survivalist in harsh and anthropogenic environments.</title>
        <authorList>
            <person name="Janssen P.J."/>
            <person name="Van Houdt R."/>
            <person name="Moors H."/>
            <person name="Monsieurs P."/>
            <person name="Morin N."/>
            <person name="Michaux A."/>
            <person name="Benotmane M.A."/>
            <person name="Leys N."/>
            <person name="Vallaeys T."/>
            <person name="Lapidus A."/>
            <person name="Monchy S."/>
            <person name="Medigue C."/>
            <person name="Taghavi S."/>
            <person name="McCorkle S."/>
            <person name="Dunn J."/>
            <person name="van der Lelie D."/>
            <person name="Mergeay M."/>
        </authorList>
    </citation>
    <scope>NUCLEOTIDE SEQUENCE [LARGE SCALE GENOMIC DNA]</scope>
    <source>
        <strain>ATCC 43123 / DSM 2839 / NBRC 102507 / CH34</strain>
    </source>
</reference>
<proteinExistence type="inferred from homology"/>
<keyword id="KW-0067">ATP-binding</keyword>
<keyword id="KW-0414">Isoprene biosynthesis</keyword>
<keyword id="KW-0418">Kinase</keyword>
<keyword id="KW-0547">Nucleotide-binding</keyword>
<keyword id="KW-1185">Reference proteome</keyword>
<keyword id="KW-0808">Transferase</keyword>
<accession>Q1LRQ0</accession>
<dbReference type="EC" id="2.7.1.148" evidence="1"/>
<dbReference type="EMBL" id="CP000352">
    <property type="protein sequence ID" value="ABF07176.1"/>
    <property type="molecule type" value="Genomic_DNA"/>
</dbReference>
<dbReference type="RefSeq" id="WP_011515178.1">
    <property type="nucleotide sequence ID" value="NC_007973.1"/>
</dbReference>
<dbReference type="SMR" id="Q1LRQ0"/>
<dbReference type="STRING" id="266264.Rmet_0290"/>
<dbReference type="KEGG" id="rme:Rmet_0290"/>
<dbReference type="eggNOG" id="COG1947">
    <property type="taxonomic scope" value="Bacteria"/>
</dbReference>
<dbReference type="HOGENOM" id="CLU_053057_3_0_4"/>
<dbReference type="UniPathway" id="UPA00056">
    <property type="reaction ID" value="UER00094"/>
</dbReference>
<dbReference type="Proteomes" id="UP000002429">
    <property type="component" value="Chromosome"/>
</dbReference>
<dbReference type="GO" id="GO:0050515">
    <property type="term" value="F:4-(cytidine 5'-diphospho)-2-C-methyl-D-erythritol kinase activity"/>
    <property type="evidence" value="ECO:0007669"/>
    <property type="project" value="UniProtKB-UniRule"/>
</dbReference>
<dbReference type="GO" id="GO:0005524">
    <property type="term" value="F:ATP binding"/>
    <property type="evidence" value="ECO:0007669"/>
    <property type="project" value="UniProtKB-UniRule"/>
</dbReference>
<dbReference type="GO" id="GO:0019288">
    <property type="term" value="P:isopentenyl diphosphate biosynthetic process, methylerythritol 4-phosphate pathway"/>
    <property type="evidence" value="ECO:0007669"/>
    <property type="project" value="UniProtKB-UniRule"/>
</dbReference>
<dbReference type="GO" id="GO:0016114">
    <property type="term" value="P:terpenoid biosynthetic process"/>
    <property type="evidence" value="ECO:0007669"/>
    <property type="project" value="InterPro"/>
</dbReference>
<dbReference type="Gene3D" id="3.30.230.10">
    <property type="match status" value="1"/>
</dbReference>
<dbReference type="Gene3D" id="3.30.70.890">
    <property type="entry name" value="GHMP kinase, C-terminal domain"/>
    <property type="match status" value="1"/>
</dbReference>
<dbReference type="HAMAP" id="MF_00061">
    <property type="entry name" value="IspE"/>
    <property type="match status" value="1"/>
</dbReference>
<dbReference type="InterPro" id="IPR013750">
    <property type="entry name" value="GHMP_kinase_C_dom"/>
</dbReference>
<dbReference type="InterPro" id="IPR036554">
    <property type="entry name" value="GHMP_kinase_C_sf"/>
</dbReference>
<dbReference type="InterPro" id="IPR006204">
    <property type="entry name" value="GHMP_kinase_N_dom"/>
</dbReference>
<dbReference type="InterPro" id="IPR004424">
    <property type="entry name" value="IspE"/>
</dbReference>
<dbReference type="InterPro" id="IPR020568">
    <property type="entry name" value="Ribosomal_Su5_D2-typ_SF"/>
</dbReference>
<dbReference type="InterPro" id="IPR014721">
    <property type="entry name" value="Ribsml_uS5_D2-typ_fold_subgr"/>
</dbReference>
<dbReference type="NCBIfam" id="TIGR00154">
    <property type="entry name" value="ispE"/>
    <property type="match status" value="1"/>
</dbReference>
<dbReference type="NCBIfam" id="NF011202">
    <property type="entry name" value="PRK14608.1"/>
    <property type="match status" value="1"/>
</dbReference>
<dbReference type="PANTHER" id="PTHR43527">
    <property type="entry name" value="4-DIPHOSPHOCYTIDYL-2-C-METHYL-D-ERYTHRITOL KINASE, CHLOROPLASTIC"/>
    <property type="match status" value="1"/>
</dbReference>
<dbReference type="PANTHER" id="PTHR43527:SF2">
    <property type="entry name" value="4-DIPHOSPHOCYTIDYL-2-C-METHYL-D-ERYTHRITOL KINASE, CHLOROPLASTIC"/>
    <property type="match status" value="1"/>
</dbReference>
<dbReference type="Pfam" id="PF08544">
    <property type="entry name" value="GHMP_kinases_C"/>
    <property type="match status" value="1"/>
</dbReference>
<dbReference type="Pfam" id="PF00288">
    <property type="entry name" value="GHMP_kinases_N"/>
    <property type="match status" value="1"/>
</dbReference>
<dbReference type="PIRSF" id="PIRSF010376">
    <property type="entry name" value="IspE"/>
    <property type="match status" value="1"/>
</dbReference>
<dbReference type="SUPFAM" id="SSF55060">
    <property type="entry name" value="GHMP Kinase, C-terminal domain"/>
    <property type="match status" value="1"/>
</dbReference>
<dbReference type="SUPFAM" id="SSF54211">
    <property type="entry name" value="Ribosomal protein S5 domain 2-like"/>
    <property type="match status" value="1"/>
</dbReference>